<comment type="function">
    <text evidence="1">Regulates ADAM17 protease, a sheddase of the epidermal growth factor (EGF) receptor ligands and TNF, thereby plays a role in sleep, cell survival, proliferation, migration and inflammation. Does not exhibit any protease activity on its own.</text>
</comment>
<comment type="subcellular location">
    <subcellularLocation>
        <location evidence="1">Endoplasmic reticulum membrane</location>
        <topology evidence="2">Multi-pass membrane protein</topology>
    </subcellularLocation>
    <subcellularLocation>
        <location evidence="1">Golgi apparatus membrane</location>
        <topology evidence="2">Multi-pass membrane protein</topology>
    </subcellularLocation>
    <text evidence="1">Predominantly localized in the endoplasmic reticulum membrane.</text>
</comment>
<comment type="similarity">
    <text evidence="4">Belongs to the peptidase S54 family.</text>
</comment>
<organism>
    <name type="scientific">Danio rerio</name>
    <name type="common">Zebrafish</name>
    <name type="synonym">Brachydanio rerio</name>
    <dbReference type="NCBI Taxonomy" id="7955"/>
    <lineage>
        <taxon>Eukaryota</taxon>
        <taxon>Metazoa</taxon>
        <taxon>Chordata</taxon>
        <taxon>Craniata</taxon>
        <taxon>Vertebrata</taxon>
        <taxon>Euteleostomi</taxon>
        <taxon>Actinopterygii</taxon>
        <taxon>Neopterygii</taxon>
        <taxon>Teleostei</taxon>
        <taxon>Ostariophysi</taxon>
        <taxon>Cypriniformes</taxon>
        <taxon>Danionidae</taxon>
        <taxon>Danioninae</taxon>
        <taxon>Danio</taxon>
    </lineage>
</organism>
<keyword id="KW-0256">Endoplasmic reticulum</keyword>
<keyword id="KW-0325">Glycoprotein</keyword>
<keyword id="KW-0333">Golgi apparatus</keyword>
<keyword id="KW-0340">Growth factor binding</keyword>
<keyword id="KW-0472">Membrane</keyword>
<keyword id="KW-0653">Protein transport</keyword>
<keyword id="KW-1185">Reference proteome</keyword>
<keyword id="KW-0812">Transmembrane</keyword>
<keyword id="KW-1133">Transmembrane helix</keyword>
<keyword id="KW-0813">Transport</keyword>
<dbReference type="EMBL" id="BC074097">
    <property type="protein sequence ID" value="AAH74097.1"/>
    <property type="molecule type" value="mRNA"/>
</dbReference>
<dbReference type="RefSeq" id="NP_001002228.1">
    <property type="nucleotide sequence ID" value="NM_001002228.1"/>
</dbReference>
<dbReference type="SMR" id="Q6GMF8"/>
<dbReference type="FunCoup" id="Q6GMF8">
    <property type="interactions" value="626"/>
</dbReference>
<dbReference type="STRING" id="7955.ENSDARP00000053094"/>
<dbReference type="MEROPS" id="S54.952"/>
<dbReference type="GlyCosmos" id="Q6GMF8">
    <property type="glycosylation" value="1 site, No reported glycans"/>
</dbReference>
<dbReference type="PaxDb" id="7955-ENSDARP00000053094"/>
<dbReference type="Ensembl" id="ENSDART00000053095">
    <property type="protein sequence ID" value="ENSDARP00000053094"/>
    <property type="gene ID" value="ENSDARG00000036541"/>
</dbReference>
<dbReference type="GeneID" id="798402"/>
<dbReference type="KEGG" id="dre:798402"/>
<dbReference type="AGR" id="ZFIN:ZDB-GENE-040704-75"/>
<dbReference type="CTD" id="798402"/>
<dbReference type="ZFIN" id="ZDB-GENE-040704-75">
    <property type="gene designation" value="rhbdf1a"/>
</dbReference>
<dbReference type="eggNOG" id="KOG2290">
    <property type="taxonomic scope" value="Eukaryota"/>
</dbReference>
<dbReference type="HOGENOM" id="CLU_011531_1_1_1"/>
<dbReference type="InParanoid" id="Q6GMF8"/>
<dbReference type="OMA" id="GGTENMA"/>
<dbReference type="OrthoDB" id="2146116at2759"/>
<dbReference type="PhylomeDB" id="Q6GMF8"/>
<dbReference type="TreeFam" id="TF312988"/>
<dbReference type="PRO" id="PR:Q6GMF8"/>
<dbReference type="Proteomes" id="UP000000437">
    <property type="component" value="Chromosome 3"/>
</dbReference>
<dbReference type="Bgee" id="ENSDARG00000036541">
    <property type="expression patterns" value="Expressed in granulocyte and 21 other cell types or tissues"/>
</dbReference>
<dbReference type="ExpressionAtlas" id="Q6GMF8">
    <property type="expression patterns" value="baseline and differential"/>
</dbReference>
<dbReference type="GO" id="GO:0005789">
    <property type="term" value="C:endoplasmic reticulum membrane"/>
    <property type="evidence" value="ECO:0000250"/>
    <property type="project" value="UniProtKB"/>
</dbReference>
<dbReference type="GO" id="GO:0000139">
    <property type="term" value="C:Golgi membrane"/>
    <property type="evidence" value="ECO:0000250"/>
    <property type="project" value="UniProtKB"/>
</dbReference>
<dbReference type="GO" id="GO:0019838">
    <property type="term" value="F:growth factor binding"/>
    <property type="evidence" value="ECO:0007669"/>
    <property type="project" value="UniProtKB-KW"/>
</dbReference>
<dbReference type="GO" id="GO:0016477">
    <property type="term" value="P:cell migration"/>
    <property type="evidence" value="ECO:0000250"/>
    <property type="project" value="UniProtKB"/>
</dbReference>
<dbReference type="GO" id="GO:0008283">
    <property type="term" value="P:cell population proliferation"/>
    <property type="evidence" value="ECO:0000250"/>
    <property type="project" value="UniProtKB"/>
</dbReference>
<dbReference type="GO" id="GO:0050709">
    <property type="term" value="P:negative regulation of protein secretion"/>
    <property type="evidence" value="ECO:0000250"/>
    <property type="project" value="UniProtKB"/>
</dbReference>
<dbReference type="GO" id="GO:0015031">
    <property type="term" value="P:protein transport"/>
    <property type="evidence" value="ECO:0007669"/>
    <property type="project" value="UniProtKB-KW"/>
</dbReference>
<dbReference type="GO" id="GO:0042058">
    <property type="term" value="P:regulation of epidermal growth factor receptor signaling pathway"/>
    <property type="evidence" value="ECO:0000250"/>
    <property type="project" value="UniProtKB"/>
</dbReference>
<dbReference type="GO" id="GO:0061136">
    <property type="term" value="P:regulation of proteasomal protein catabolic process"/>
    <property type="evidence" value="ECO:0000250"/>
    <property type="project" value="UniProtKB"/>
</dbReference>
<dbReference type="GO" id="GO:0050708">
    <property type="term" value="P:regulation of protein secretion"/>
    <property type="evidence" value="ECO:0000318"/>
    <property type="project" value="GO_Central"/>
</dbReference>
<dbReference type="FunFam" id="1.20.1540.10:FF:000001">
    <property type="entry name" value="Putative inactive rhomboid protein 1"/>
    <property type="match status" value="1"/>
</dbReference>
<dbReference type="Gene3D" id="1.20.1540.10">
    <property type="entry name" value="Rhomboid-like"/>
    <property type="match status" value="1"/>
</dbReference>
<dbReference type="InterPro" id="IPR051512">
    <property type="entry name" value="Inactive_Rhomboid"/>
</dbReference>
<dbReference type="InterPro" id="IPR022241">
    <property type="entry name" value="iRhom1_2_N"/>
</dbReference>
<dbReference type="InterPro" id="IPR022764">
    <property type="entry name" value="Peptidase_S54_rhomboid_dom"/>
</dbReference>
<dbReference type="InterPro" id="IPR035952">
    <property type="entry name" value="Rhomboid-like_sf"/>
</dbReference>
<dbReference type="PANTHER" id="PTHR45965">
    <property type="entry name" value="INACTIVE RHOMBOID PROTEIN"/>
    <property type="match status" value="1"/>
</dbReference>
<dbReference type="PANTHER" id="PTHR45965:SF4">
    <property type="entry name" value="INACTIVE RHOMBOID PROTEIN 1"/>
    <property type="match status" value="1"/>
</dbReference>
<dbReference type="Pfam" id="PF12595">
    <property type="entry name" value="iRhom1-2_N"/>
    <property type="match status" value="1"/>
</dbReference>
<dbReference type="Pfam" id="PF01694">
    <property type="entry name" value="Rhomboid"/>
    <property type="match status" value="1"/>
</dbReference>
<dbReference type="SUPFAM" id="SSF144091">
    <property type="entry name" value="Rhomboid-like"/>
    <property type="match status" value="1"/>
</dbReference>
<gene>
    <name type="primary">rhbdf1</name>
    <name type="ORF">zgc:91984</name>
</gene>
<evidence type="ECO:0000250" key="1">
    <source>
        <dbReference type="UniProtKB" id="Q96CC6"/>
    </source>
</evidence>
<evidence type="ECO:0000255" key="2"/>
<evidence type="ECO:0000256" key="3">
    <source>
        <dbReference type="SAM" id="MobiDB-lite"/>
    </source>
</evidence>
<evidence type="ECO:0000305" key="4"/>
<proteinExistence type="evidence at transcript level"/>
<reference key="1">
    <citation type="submission" date="2004-06" db="EMBL/GenBank/DDBJ databases">
        <authorList>
            <consortium name="NIH - Zebrafish Gene Collection (ZGC) project"/>
        </authorList>
    </citation>
    <scope>NUCLEOTIDE SEQUENCE [LARGE SCALE MRNA]</scope>
</reference>
<feature type="chain" id="PRO_0000340111" description="Inactive rhomboid protein 1">
    <location>
        <begin position="1"/>
        <end position="857"/>
    </location>
</feature>
<feature type="topological domain" description="Cytoplasmic" evidence="2">
    <location>
        <begin position="1"/>
        <end position="413"/>
    </location>
</feature>
<feature type="transmembrane region" description="Helical" evidence="2">
    <location>
        <begin position="414"/>
        <end position="434"/>
    </location>
</feature>
<feature type="topological domain" description="Lumenal" evidence="2">
    <location>
        <begin position="435"/>
        <end position="661"/>
    </location>
</feature>
<feature type="transmembrane region" description="Helical" evidence="2">
    <location>
        <begin position="662"/>
        <end position="682"/>
    </location>
</feature>
<feature type="topological domain" description="Cytoplasmic" evidence="2">
    <location>
        <begin position="683"/>
        <end position="693"/>
    </location>
</feature>
<feature type="transmembrane region" description="Helical" evidence="2">
    <location>
        <begin position="694"/>
        <end position="714"/>
    </location>
</feature>
<feature type="topological domain" description="Lumenal" evidence="2">
    <location>
        <begin position="715"/>
        <end position="716"/>
    </location>
</feature>
<feature type="transmembrane region" description="Helical" evidence="2">
    <location>
        <begin position="717"/>
        <end position="737"/>
    </location>
</feature>
<feature type="topological domain" description="Cytoplasmic" evidence="2">
    <location>
        <begin position="738"/>
        <end position="748"/>
    </location>
</feature>
<feature type="transmembrane region" description="Helical" evidence="2">
    <location>
        <begin position="749"/>
        <end position="769"/>
    </location>
</feature>
<feature type="topological domain" description="Lumenal" evidence="2">
    <location>
        <begin position="770"/>
        <end position="774"/>
    </location>
</feature>
<feature type="transmembrane region" description="Helical" evidence="2">
    <location>
        <begin position="775"/>
        <end position="795"/>
    </location>
</feature>
<feature type="topological domain" description="Cytoplasmic" evidence="2">
    <location>
        <begin position="796"/>
        <end position="805"/>
    </location>
</feature>
<feature type="transmembrane region" description="Helical" evidence="2">
    <location>
        <begin position="806"/>
        <end position="826"/>
    </location>
</feature>
<feature type="topological domain" description="Lumenal" evidence="2">
    <location>
        <begin position="827"/>
        <end position="857"/>
    </location>
</feature>
<feature type="region of interest" description="Disordered" evidence="3">
    <location>
        <begin position="283"/>
        <end position="307"/>
    </location>
</feature>
<feature type="compositionally biased region" description="Basic and acidic residues" evidence="3">
    <location>
        <begin position="290"/>
        <end position="300"/>
    </location>
</feature>
<feature type="glycosylation site" description="N-linked (GlcNAc...) asparagine" evidence="2">
    <location>
        <position position="585"/>
    </location>
</feature>
<name>RHDF1_DANRE</name>
<protein>
    <recommendedName>
        <fullName>Inactive rhomboid protein 1</fullName>
        <shortName>iRhom1</shortName>
    </recommendedName>
    <alternativeName>
        <fullName>Rhomboid family member 1</fullName>
    </alternativeName>
</protein>
<accession>Q6GMF8</accession>
<sequence length="857" mass="97841">MAELRRDSTSSLQRKKPPWLKLDIPTAHVSVDEVPAFVPPVKRQGFHRSASMPVETSHFHSPQRDIIDHRRAAFQRQSSITQTIKRGTADWFGVSKDGDATQKWQRKSLRHCSLRYGKLKPQVIREMELPSQDNISLTSTETPPPLYVPSSQHGMQKIVDPLARGRAFRMVEEVDGYSVPQTPITPGAASICSFNSSRSGLNRIPRRRKRESVAKMSFRAAAALVKGRSLREGTLRRAHRRSFTPASFIEEDVVDFPDELDTSFFARDIMMHEEMSTFHDEVFESPSDSTMKDVDSKQLDESELTGSALDKSELEKSHLMLPLERGWRKVKEKTPAPPKIRLKQEVVSVNGQRRGQRIGLPVKKLFAREKRPYGLGMVGKLTNRTYRKRIDSYVKKQIEDMDDHRPFFTYWITFVHILITILAVCIYGIAPVGFSQHETVDSVLRNKGVYENVKFVQQENFWIGPSSEALIHLGAKFSPCMRRDNQVHELIKKKQELERNSACCVRNDRSGCLQTSEEECSSTLAVWVKWPQHPSVPQLDGVARQHGSVCHQDPRTCTEPASVSPHEWPDDITKWPICTKYNSGNHTNLPHIDCTITGRPCCIGTKGRCEITSREYCDFMKGYFHEEATLCSQVHCMDDVCGLLPFLNPEVPDQFYRLWLSLFLHAGILHCLVSVCFQMTILRDLEKLAGWLRISIIYILSGITGNLASAIFLPYRAEVGPAGSQFGILACLFVELIQSWQILAQPWRAFTKLLCVVLFLFAFGLLPWIDNFAHISGFISGFFLSFAFLPYISFGRLDMYRKRCQIIIFLVVFLGLFAGLVVLFYVHPIKCEWCELLTCIPFTDKFCEKYDLNAHLH</sequence>